<comment type="function">
    <text evidence="3">Methylates (mono- and asymmetric dimethylation) the guanidino nitrogens of arginyl residues in proteins. May methylate histone H3 at 'Arg-17' and activate transcription via chromatin remodeling.</text>
</comment>
<comment type="catalytic activity">
    <reaction evidence="3">
        <text>L-arginyl-[protein] + 2 S-adenosyl-L-methionine = N(omega),N(omega)-dimethyl-L-arginyl-[protein] + 2 S-adenosyl-L-homocysteine + 2 H(+)</text>
        <dbReference type="Rhea" id="RHEA:48096"/>
        <dbReference type="Rhea" id="RHEA-COMP:10532"/>
        <dbReference type="Rhea" id="RHEA-COMP:11991"/>
        <dbReference type="ChEBI" id="CHEBI:15378"/>
        <dbReference type="ChEBI" id="CHEBI:29965"/>
        <dbReference type="ChEBI" id="CHEBI:57856"/>
        <dbReference type="ChEBI" id="CHEBI:59789"/>
        <dbReference type="ChEBI" id="CHEBI:61897"/>
        <dbReference type="EC" id="2.1.1.319"/>
    </reaction>
</comment>
<comment type="subunit">
    <text evidence="1">Homodimer.</text>
</comment>
<comment type="subcellular location">
    <subcellularLocation>
        <location evidence="4">Cytoplasm</location>
    </subcellularLocation>
    <subcellularLocation>
        <location evidence="4">Nucleus</location>
    </subcellularLocation>
</comment>
<comment type="PTM">
    <text evidence="1">The dimethylated protein is the major form.</text>
</comment>
<comment type="similarity">
    <text evidence="5">Belongs to the class I-like SAM-binding methyltransferase superfamily. Protein arginine N-methyltransferase family.</text>
</comment>
<name>CARM1_CULQU</name>
<feature type="chain" id="PRO_0000382220" description="Histone-arginine methyltransferase CARMER">
    <location>
        <begin position="1"/>
        <end position="599"/>
    </location>
</feature>
<feature type="domain" description="SAM-dependent MTase PRMT-type" evidence="5">
    <location>
        <begin position="127"/>
        <end position="434"/>
    </location>
</feature>
<feature type="binding site" evidence="2">
    <location>
        <position position="140"/>
    </location>
    <ligand>
        <name>S-adenosyl-L-methionine</name>
        <dbReference type="ChEBI" id="CHEBI:59789"/>
    </ligand>
</feature>
<feature type="binding site" evidence="2">
    <location>
        <position position="149"/>
    </location>
    <ligand>
        <name>S-adenosyl-L-methionine</name>
        <dbReference type="ChEBI" id="CHEBI:59789"/>
    </ligand>
</feature>
<feature type="binding site" evidence="2">
    <location>
        <position position="173"/>
    </location>
    <ligand>
        <name>S-adenosyl-L-methionine</name>
        <dbReference type="ChEBI" id="CHEBI:59789"/>
    </ligand>
</feature>
<feature type="binding site" evidence="2">
    <location>
        <position position="195"/>
    </location>
    <ligand>
        <name>S-adenosyl-L-methionine</name>
        <dbReference type="ChEBI" id="CHEBI:59789"/>
    </ligand>
</feature>
<feature type="binding site" evidence="2">
    <location>
        <position position="224"/>
    </location>
    <ligand>
        <name>S-adenosyl-L-methionine</name>
        <dbReference type="ChEBI" id="CHEBI:59789"/>
    </ligand>
</feature>
<feature type="binding site" evidence="1">
    <location>
        <position position="252"/>
    </location>
    <ligand>
        <name>S-adenosyl-L-methionine</name>
        <dbReference type="ChEBI" id="CHEBI:59789"/>
    </ligand>
</feature>
<feature type="modified residue" description="Asymmetric dimethylarginine; by autocatalysis" evidence="3">
    <location>
        <position position="487"/>
    </location>
</feature>
<reference evidence="6" key="1">
    <citation type="submission" date="2007-03" db="EMBL/GenBank/DDBJ databases">
        <title>Annotation of Culex pipiens quinquefasciatus.</title>
        <authorList>
            <consortium name="The Broad Institute Genome Sequencing Platform"/>
            <person name="Atkinson P.W."/>
            <person name="Hemingway J."/>
            <person name="Christensen B.M."/>
            <person name="Higgs S."/>
            <person name="Kodira C.D."/>
            <person name="Hannick L.I."/>
            <person name="Megy K."/>
            <person name="O'Leary S.B."/>
            <person name="Pearson M."/>
            <person name="Haas B.J."/>
            <person name="Mauceli E."/>
            <person name="Wortman J.R."/>
            <person name="Lee N.H."/>
            <person name="Guigo R."/>
            <person name="Stanke M."/>
            <person name="Alvarado L."/>
            <person name="Amedeo P."/>
            <person name="Antoine C.H."/>
            <person name="Arensburger P."/>
            <person name="Bidwell S.L."/>
            <person name="Crawford M."/>
            <person name="Camaro F."/>
            <person name="Devon K."/>
            <person name="Engels R."/>
            <person name="Hammond M."/>
            <person name="Howarth C."/>
            <person name="Koehrsen M."/>
            <person name="Lawson D."/>
            <person name="Montgomery P."/>
            <person name="Nene V."/>
            <person name="Nusbaum C."/>
            <person name="Puiu D."/>
            <person name="Romero-Severson J."/>
            <person name="Severson D.W."/>
            <person name="Shumway M."/>
            <person name="Sisk P."/>
            <person name="Stolte C."/>
            <person name="Zeng Q."/>
            <person name="Eisenstadt E."/>
            <person name="Fraser-Liggett C.M."/>
            <person name="Strausberg R."/>
            <person name="Galagan J."/>
            <person name="Birren B."/>
            <person name="Collins F.H."/>
        </authorList>
    </citation>
    <scope>NUCLEOTIDE SEQUENCE [LARGE SCALE GENOMIC DNA]</scope>
    <source>
        <strain evidence="6">JHB</strain>
    </source>
</reference>
<organism>
    <name type="scientific">Culex quinquefasciatus</name>
    <name type="common">Southern house mosquito</name>
    <name type="synonym">Culex pungens</name>
    <dbReference type="NCBI Taxonomy" id="7176"/>
    <lineage>
        <taxon>Eukaryota</taxon>
        <taxon>Metazoa</taxon>
        <taxon>Ecdysozoa</taxon>
        <taxon>Arthropoda</taxon>
        <taxon>Hexapoda</taxon>
        <taxon>Insecta</taxon>
        <taxon>Pterygota</taxon>
        <taxon>Neoptera</taxon>
        <taxon>Endopterygota</taxon>
        <taxon>Diptera</taxon>
        <taxon>Nematocera</taxon>
        <taxon>Culicoidea</taxon>
        <taxon>Culicidae</taxon>
        <taxon>Culicinae</taxon>
        <taxon>Culicini</taxon>
        <taxon>Culex</taxon>
        <taxon>Culex</taxon>
    </lineage>
</organism>
<sequence>MCEQLARLHGCNILIIGDNDCLVNKYGHSVTIACGYDPQGMSVRILKEGGGGGGGGGGGQQLEEYPVNAKTTHLNHGHTSHVVVAGGEMLYLKFASKADCQLFRSLLQKMSGKVNSVFNLRTEDSSASQYFQFYGYLSQQQNMMQDFVRTSTYQRAIYSNSQDFHNKIVLDVGAGSGILSFFAVQAGAAKVYAVEASNMAQYAQQLVHSNNLNGKITVIAGKIEEIELPEMVDVIISEPMGYMLYNERMLETYLHGKKWLKPEGKMFPSRGDLHVAPFTDEALYMEQYNKANFWMQSEFHGVNLVSLRDAAMKEYFRQPIVDTFDIRICMAKSIRHTTNFLTADEKDLHRIQIDVEFHILETGTCHGLAFWFDVEFAGSCSQIWLSTAPTESLTHWYQVRCLLQTPIFVKQGQVLSGKVVLAANQRQSYDVEIDLKLEGTMITSCNTLDLKNPYFRYTGAPVPAPPGSNTTSPSEAYWGQLDAQGARNAVNLVNGITVNGLGEVDMSIINSNMMPMGNQPNIHPGLISSTGRQQSAQQQVTPSQQLTMNPTIACAATSTQNVAQQQLIGGAISPSLFTTPTQQIINSHHAQPIHGGQFY</sequence>
<dbReference type="EC" id="2.1.1.319" evidence="3"/>
<dbReference type="EMBL" id="DS231832">
    <property type="protein sequence ID" value="EDS31802.1"/>
    <property type="molecule type" value="Genomic_DNA"/>
</dbReference>
<dbReference type="SMR" id="B0W3L6"/>
<dbReference type="FunCoup" id="B0W3L6">
    <property type="interactions" value="2342"/>
</dbReference>
<dbReference type="STRING" id="7176.B0W3L6"/>
<dbReference type="EnsemblMetazoa" id="CPIJ001402-RA">
    <property type="protein sequence ID" value="CPIJ001402-PA"/>
    <property type="gene ID" value="CPIJ001402"/>
</dbReference>
<dbReference type="EnsemblMetazoa" id="CQUJHB011210.R17315">
    <property type="protein sequence ID" value="CQUJHB011210.P17315"/>
    <property type="gene ID" value="CQUJHB011210"/>
</dbReference>
<dbReference type="EnsemblMetazoa" id="XM_001843248.2">
    <property type="protein sequence ID" value="XP_001843300.1"/>
    <property type="gene ID" value="LOC6032759"/>
</dbReference>
<dbReference type="GeneID" id="6032759"/>
<dbReference type="KEGG" id="cqu:CpipJ_CPIJ001402"/>
<dbReference type="CTD" id="420"/>
<dbReference type="VEuPathDB" id="VectorBase:CPIJ001402"/>
<dbReference type="VEuPathDB" id="VectorBase:CQUJHB011210"/>
<dbReference type="eggNOG" id="KOG1500">
    <property type="taxonomic scope" value="Eukaryota"/>
</dbReference>
<dbReference type="HOGENOM" id="CLU_017375_0_1_1"/>
<dbReference type="InParanoid" id="B0W3L6"/>
<dbReference type="OMA" id="ASNMAHH"/>
<dbReference type="OrthoDB" id="7848332at2759"/>
<dbReference type="PhylomeDB" id="B0W3L6"/>
<dbReference type="Proteomes" id="UP000002320">
    <property type="component" value="Unassembled WGS sequence"/>
</dbReference>
<dbReference type="GO" id="GO:0005737">
    <property type="term" value="C:cytoplasm"/>
    <property type="evidence" value="ECO:0000250"/>
    <property type="project" value="UniProtKB"/>
</dbReference>
<dbReference type="GO" id="GO:0005634">
    <property type="term" value="C:nucleus"/>
    <property type="evidence" value="ECO:0000250"/>
    <property type="project" value="UniProtKB"/>
</dbReference>
<dbReference type="GO" id="GO:0035642">
    <property type="term" value="F:histone H3R17 methyltransferase activity"/>
    <property type="evidence" value="ECO:0000250"/>
    <property type="project" value="UniProtKB"/>
</dbReference>
<dbReference type="GO" id="GO:0070611">
    <property type="term" value="F:histone H3R2 methyltransferase activity"/>
    <property type="evidence" value="ECO:0000250"/>
    <property type="project" value="UniProtKB"/>
</dbReference>
<dbReference type="GO" id="GO:0140903">
    <property type="term" value="F:histone H3R26 methyltransferase activity"/>
    <property type="evidence" value="ECO:0000250"/>
    <property type="project" value="UniProtKB"/>
</dbReference>
<dbReference type="GO" id="GO:0035242">
    <property type="term" value="F:protein-arginine omega-N asymmetric methyltransferase activity"/>
    <property type="evidence" value="ECO:0000250"/>
    <property type="project" value="UniProtKB"/>
</dbReference>
<dbReference type="GO" id="GO:0035241">
    <property type="term" value="F:protein-arginine omega-N monomethyltransferase activity"/>
    <property type="evidence" value="ECO:0000250"/>
    <property type="project" value="UniProtKB"/>
</dbReference>
<dbReference type="GO" id="GO:0006338">
    <property type="term" value="P:chromatin remodeling"/>
    <property type="evidence" value="ECO:0000250"/>
    <property type="project" value="UniProtKB"/>
</dbReference>
<dbReference type="GO" id="GO:0019919">
    <property type="term" value="P:peptidyl-arginine methylation, to asymmetrical-dimethyl arginine"/>
    <property type="evidence" value="ECO:0000250"/>
    <property type="project" value="UniProtKB"/>
</dbReference>
<dbReference type="GO" id="GO:0006355">
    <property type="term" value="P:regulation of DNA-templated transcription"/>
    <property type="evidence" value="ECO:0000250"/>
    <property type="project" value="UniProtKB"/>
</dbReference>
<dbReference type="CDD" id="cd02440">
    <property type="entry name" value="AdoMet_MTases"/>
    <property type="match status" value="1"/>
</dbReference>
<dbReference type="FunFam" id="2.70.160.11:FF:000002">
    <property type="entry name" value="Probable histone-arginine methyltransferase CARM1"/>
    <property type="match status" value="1"/>
</dbReference>
<dbReference type="FunFam" id="3.40.50.150:FF:000031">
    <property type="entry name" value="Putative Histone-arginine methyltransferase CARM1"/>
    <property type="match status" value="1"/>
</dbReference>
<dbReference type="Gene3D" id="2.70.160.11">
    <property type="entry name" value="Hnrnp arginine n-methyltransferase1"/>
    <property type="match status" value="1"/>
</dbReference>
<dbReference type="Gene3D" id="3.40.50.150">
    <property type="entry name" value="Vaccinia Virus protein VP39"/>
    <property type="match status" value="1"/>
</dbReference>
<dbReference type="InterPro" id="IPR025799">
    <property type="entry name" value="Arg_MeTrfase"/>
</dbReference>
<dbReference type="InterPro" id="IPR055135">
    <property type="entry name" value="PRMT_dom"/>
</dbReference>
<dbReference type="InterPro" id="IPR029063">
    <property type="entry name" value="SAM-dependent_MTases_sf"/>
</dbReference>
<dbReference type="PANTHER" id="PTHR11006:SF10">
    <property type="entry name" value="HISTONE-ARGININE METHYLTRANSFERASE CARMER-RELATED"/>
    <property type="match status" value="1"/>
</dbReference>
<dbReference type="PANTHER" id="PTHR11006">
    <property type="entry name" value="PROTEIN ARGININE N-METHYLTRANSFERASE"/>
    <property type="match status" value="1"/>
</dbReference>
<dbReference type="Pfam" id="PF06325">
    <property type="entry name" value="PrmA"/>
    <property type="match status" value="1"/>
</dbReference>
<dbReference type="Pfam" id="PF22528">
    <property type="entry name" value="PRMT_C"/>
    <property type="match status" value="1"/>
</dbReference>
<dbReference type="SUPFAM" id="SSF53335">
    <property type="entry name" value="S-adenosyl-L-methionine-dependent methyltransferases"/>
    <property type="match status" value="1"/>
</dbReference>
<dbReference type="PROSITE" id="PS51678">
    <property type="entry name" value="SAM_MT_PRMT"/>
    <property type="match status" value="1"/>
</dbReference>
<evidence type="ECO:0000250" key="1"/>
<evidence type="ECO:0000250" key="2">
    <source>
        <dbReference type="UniProtKB" id="Q63009"/>
    </source>
</evidence>
<evidence type="ECO:0000250" key="3">
    <source>
        <dbReference type="UniProtKB" id="Q7Q2B7"/>
    </source>
</evidence>
<evidence type="ECO:0000250" key="4">
    <source>
        <dbReference type="UniProtKB" id="Q9VH48"/>
    </source>
</evidence>
<evidence type="ECO:0000255" key="5">
    <source>
        <dbReference type="PROSITE-ProRule" id="PRU01015"/>
    </source>
</evidence>
<evidence type="ECO:0000312" key="6">
    <source>
        <dbReference type="EMBL" id="EDS31802.1"/>
    </source>
</evidence>
<protein>
    <recommendedName>
        <fullName evidence="3">Histone-arginine methyltransferase CARMER</fullName>
        <ecNumber evidence="3">2.1.1.319</ecNumber>
    </recommendedName>
</protein>
<gene>
    <name type="primary">Art4</name>
    <name type="ORF">CPIJ001402</name>
</gene>
<proteinExistence type="inferred from homology"/>
<accession>B0W3L6</accession>
<keyword id="KW-0156">Chromatin regulator</keyword>
<keyword id="KW-0963">Cytoplasm</keyword>
<keyword id="KW-0488">Methylation</keyword>
<keyword id="KW-0489">Methyltransferase</keyword>
<keyword id="KW-0539">Nucleus</keyword>
<keyword id="KW-1185">Reference proteome</keyword>
<keyword id="KW-0949">S-adenosyl-L-methionine</keyword>
<keyword id="KW-0804">Transcription</keyword>
<keyword id="KW-0805">Transcription regulation</keyword>
<keyword id="KW-0808">Transferase</keyword>